<organism>
    <name type="scientific">Yersinia pseudotuberculosis serotype IB (strain PB1/+)</name>
    <dbReference type="NCBI Taxonomy" id="502801"/>
    <lineage>
        <taxon>Bacteria</taxon>
        <taxon>Pseudomonadati</taxon>
        <taxon>Pseudomonadota</taxon>
        <taxon>Gammaproteobacteria</taxon>
        <taxon>Enterobacterales</taxon>
        <taxon>Yersiniaceae</taxon>
        <taxon>Yersinia</taxon>
    </lineage>
</organism>
<accession>B2K2P8</accession>
<gene>
    <name evidence="1" type="primary">rlmE</name>
    <name evidence="1" type="synonym">ftsJ</name>
    <name evidence="1" type="synonym">rrmJ</name>
    <name type="ordered locus">YPTS_0503</name>
</gene>
<evidence type="ECO:0000255" key="1">
    <source>
        <dbReference type="HAMAP-Rule" id="MF_01547"/>
    </source>
</evidence>
<proteinExistence type="inferred from homology"/>
<reference key="1">
    <citation type="submission" date="2008-04" db="EMBL/GenBank/DDBJ databases">
        <title>Complete sequence of Yersinia pseudotuberculosis PB1/+.</title>
        <authorList>
            <person name="Copeland A."/>
            <person name="Lucas S."/>
            <person name="Lapidus A."/>
            <person name="Glavina del Rio T."/>
            <person name="Dalin E."/>
            <person name="Tice H."/>
            <person name="Bruce D."/>
            <person name="Goodwin L."/>
            <person name="Pitluck S."/>
            <person name="Munk A.C."/>
            <person name="Brettin T."/>
            <person name="Detter J.C."/>
            <person name="Han C."/>
            <person name="Tapia R."/>
            <person name="Schmutz J."/>
            <person name="Larimer F."/>
            <person name="Land M."/>
            <person name="Hauser L."/>
            <person name="Challacombe J.F."/>
            <person name="Green L."/>
            <person name="Lindler L.E."/>
            <person name="Nikolich M.P."/>
            <person name="Richardson P."/>
        </authorList>
    </citation>
    <scope>NUCLEOTIDE SEQUENCE [LARGE SCALE GENOMIC DNA]</scope>
    <source>
        <strain>PB1/+</strain>
    </source>
</reference>
<dbReference type="EC" id="2.1.1.166" evidence="1"/>
<dbReference type="EMBL" id="CP001048">
    <property type="protein sequence ID" value="ACC87489.1"/>
    <property type="molecule type" value="Genomic_DNA"/>
</dbReference>
<dbReference type="RefSeq" id="WP_002228196.1">
    <property type="nucleotide sequence ID" value="NZ_CP009780.1"/>
</dbReference>
<dbReference type="SMR" id="B2K2P8"/>
<dbReference type="GeneID" id="57975211"/>
<dbReference type="KEGG" id="ypb:YPTS_0503"/>
<dbReference type="PATRIC" id="fig|502801.10.peg.4177"/>
<dbReference type="GO" id="GO:0005737">
    <property type="term" value="C:cytoplasm"/>
    <property type="evidence" value="ECO:0007669"/>
    <property type="project" value="UniProtKB-SubCell"/>
</dbReference>
<dbReference type="GO" id="GO:0008650">
    <property type="term" value="F:rRNA (uridine-2'-O-)-methyltransferase activity"/>
    <property type="evidence" value="ECO:0007669"/>
    <property type="project" value="UniProtKB-UniRule"/>
</dbReference>
<dbReference type="FunFam" id="3.40.50.150:FF:000005">
    <property type="entry name" value="Ribosomal RNA large subunit methyltransferase E"/>
    <property type="match status" value="1"/>
</dbReference>
<dbReference type="Gene3D" id="3.40.50.150">
    <property type="entry name" value="Vaccinia Virus protein VP39"/>
    <property type="match status" value="1"/>
</dbReference>
<dbReference type="HAMAP" id="MF_01547">
    <property type="entry name" value="RNA_methyltr_E"/>
    <property type="match status" value="1"/>
</dbReference>
<dbReference type="InterPro" id="IPR050082">
    <property type="entry name" value="RNA_methyltr_RlmE"/>
</dbReference>
<dbReference type="InterPro" id="IPR002877">
    <property type="entry name" value="RNA_MeTrfase_FtsJ_dom"/>
</dbReference>
<dbReference type="InterPro" id="IPR015507">
    <property type="entry name" value="rRNA-MeTfrase_E"/>
</dbReference>
<dbReference type="InterPro" id="IPR004512">
    <property type="entry name" value="rRNA_MeTrfase_gammaproteobac"/>
</dbReference>
<dbReference type="InterPro" id="IPR029063">
    <property type="entry name" value="SAM-dependent_MTases_sf"/>
</dbReference>
<dbReference type="NCBIfam" id="NF008390">
    <property type="entry name" value="PRK11188.1"/>
    <property type="match status" value="1"/>
</dbReference>
<dbReference type="NCBIfam" id="TIGR00438">
    <property type="entry name" value="rrmJ"/>
    <property type="match status" value="1"/>
</dbReference>
<dbReference type="PANTHER" id="PTHR10920">
    <property type="entry name" value="RIBOSOMAL RNA METHYLTRANSFERASE"/>
    <property type="match status" value="1"/>
</dbReference>
<dbReference type="PANTHER" id="PTHR10920:SF18">
    <property type="entry name" value="RRNA METHYLTRANSFERASE 2, MITOCHONDRIAL"/>
    <property type="match status" value="1"/>
</dbReference>
<dbReference type="Pfam" id="PF01728">
    <property type="entry name" value="FtsJ"/>
    <property type="match status" value="1"/>
</dbReference>
<dbReference type="PIRSF" id="PIRSF005461">
    <property type="entry name" value="23S_rRNA_mtase"/>
    <property type="match status" value="1"/>
</dbReference>
<dbReference type="SUPFAM" id="SSF53335">
    <property type="entry name" value="S-adenosyl-L-methionine-dependent methyltransferases"/>
    <property type="match status" value="1"/>
</dbReference>
<protein>
    <recommendedName>
        <fullName evidence="1">Ribosomal RNA large subunit methyltransferase E</fullName>
        <ecNumber evidence="1">2.1.1.166</ecNumber>
    </recommendedName>
    <alternativeName>
        <fullName evidence="1">23S rRNA Um2552 methyltransferase</fullName>
    </alternativeName>
    <alternativeName>
        <fullName evidence="1">rRNA (uridine-2'-O-)-methyltransferase</fullName>
    </alternativeName>
</protein>
<sequence length="209" mass="23409">MSNKKRSASSSRWLQEHFSDKYVIQAQKKGLRSRAWFKLDEIQQSDKLFKQGMTVVDLGAAPGGWSQYAVTQIGSKGRVIACDLLPMDPIVGVDFLQGDFRDELVLKALLERVGDKKVQVVMCDMAPNMSGTPAVDIPKSMYLVELALDMCRDVLAPGGSFLVKVFQGDGFDEYLREIRSLFTKVKIRKPDASRARSREVYIVATGRKL</sequence>
<feature type="chain" id="PRO_1000195032" description="Ribosomal RNA large subunit methyltransferase E">
    <location>
        <begin position="1"/>
        <end position="209"/>
    </location>
</feature>
<feature type="active site" description="Proton acceptor" evidence="1">
    <location>
        <position position="164"/>
    </location>
</feature>
<feature type="binding site" evidence="1">
    <location>
        <position position="63"/>
    </location>
    <ligand>
        <name>S-adenosyl-L-methionine</name>
        <dbReference type="ChEBI" id="CHEBI:59789"/>
    </ligand>
</feature>
<feature type="binding site" evidence="1">
    <location>
        <position position="65"/>
    </location>
    <ligand>
        <name>S-adenosyl-L-methionine</name>
        <dbReference type="ChEBI" id="CHEBI:59789"/>
    </ligand>
</feature>
<feature type="binding site" evidence="1">
    <location>
        <position position="83"/>
    </location>
    <ligand>
        <name>S-adenosyl-L-methionine</name>
        <dbReference type="ChEBI" id="CHEBI:59789"/>
    </ligand>
</feature>
<feature type="binding site" evidence="1">
    <location>
        <position position="99"/>
    </location>
    <ligand>
        <name>S-adenosyl-L-methionine</name>
        <dbReference type="ChEBI" id="CHEBI:59789"/>
    </ligand>
</feature>
<feature type="binding site" evidence="1">
    <location>
        <position position="124"/>
    </location>
    <ligand>
        <name>S-adenosyl-L-methionine</name>
        <dbReference type="ChEBI" id="CHEBI:59789"/>
    </ligand>
</feature>
<comment type="function">
    <text evidence="1">Specifically methylates the uridine in position 2552 of 23S rRNA at the 2'-O position of the ribose in the fully assembled 50S ribosomal subunit.</text>
</comment>
<comment type="catalytic activity">
    <reaction evidence="1">
        <text>uridine(2552) in 23S rRNA + S-adenosyl-L-methionine = 2'-O-methyluridine(2552) in 23S rRNA + S-adenosyl-L-homocysteine + H(+)</text>
        <dbReference type="Rhea" id="RHEA:42720"/>
        <dbReference type="Rhea" id="RHEA-COMP:10202"/>
        <dbReference type="Rhea" id="RHEA-COMP:10203"/>
        <dbReference type="ChEBI" id="CHEBI:15378"/>
        <dbReference type="ChEBI" id="CHEBI:57856"/>
        <dbReference type="ChEBI" id="CHEBI:59789"/>
        <dbReference type="ChEBI" id="CHEBI:65315"/>
        <dbReference type="ChEBI" id="CHEBI:74478"/>
        <dbReference type="EC" id="2.1.1.166"/>
    </reaction>
</comment>
<comment type="subcellular location">
    <subcellularLocation>
        <location evidence="1">Cytoplasm</location>
    </subcellularLocation>
</comment>
<comment type="similarity">
    <text evidence="1">Belongs to the class I-like SAM-binding methyltransferase superfamily. RNA methyltransferase RlmE family.</text>
</comment>
<name>RLME_YERPB</name>
<keyword id="KW-0963">Cytoplasm</keyword>
<keyword id="KW-0489">Methyltransferase</keyword>
<keyword id="KW-0698">rRNA processing</keyword>
<keyword id="KW-0949">S-adenosyl-L-methionine</keyword>
<keyword id="KW-0808">Transferase</keyword>